<gene>
    <name evidence="1" type="primary">psbC</name>
</gene>
<protein>
    <recommendedName>
        <fullName evidence="1">Photosystem II CP43 reaction center protein</fullName>
    </recommendedName>
    <alternativeName>
        <fullName evidence="1">PSII 43 kDa protein</fullName>
    </alternativeName>
    <alternativeName>
        <fullName evidence="1">Protein CP-43</fullName>
    </alternativeName>
</protein>
<dbReference type="EMBL" id="Z11874">
    <property type="status" value="NOT_ANNOTATED_CDS"/>
    <property type="molecule type" value="Genomic_DNA"/>
</dbReference>
<dbReference type="EMBL" id="X04509">
    <property type="protein sequence ID" value="CAA28193.1"/>
    <property type="status" value="ALT_SEQ"/>
    <property type="molecule type" value="Genomic_DNA"/>
</dbReference>
<dbReference type="EMBL" id="X70810">
    <property type="protein sequence ID" value="CAA50079.1"/>
    <property type="molecule type" value="Genomic_DNA"/>
</dbReference>
<dbReference type="PIR" id="S34498">
    <property type="entry name" value="S34498"/>
</dbReference>
<dbReference type="RefSeq" id="NP_041892.1">
    <property type="nucleotide sequence ID" value="NC_001603.2"/>
</dbReference>
<dbReference type="SMR" id="P05700"/>
<dbReference type="GeneID" id="807496"/>
<dbReference type="GO" id="GO:0009535">
    <property type="term" value="C:chloroplast thylakoid membrane"/>
    <property type="evidence" value="ECO:0007669"/>
    <property type="project" value="UniProtKB-SubCell"/>
</dbReference>
<dbReference type="GO" id="GO:0009523">
    <property type="term" value="C:photosystem II"/>
    <property type="evidence" value="ECO:0007669"/>
    <property type="project" value="UniProtKB-KW"/>
</dbReference>
<dbReference type="GO" id="GO:0016168">
    <property type="term" value="F:chlorophyll binding"/>
    <property type="evidence" value="ECO:0007669"/>
    <property type="project" value="UniProtKB-UniRule"/>
</dbReference>
<dbReference type="GO" id="GO:0045156">
    <property type="term" value="F:electron transporter, transferring electrons within the cyclic electron transport pathway of photosynthesis activity"/>
    <property type="evidence" value="ECO:0007669"/>
    <property type="project" value="InterPro"/>
</dbReference>
<dbReference type="GO" id="GO:0046872">
    <property type="term" value="F:metal ion binding"/>
    <property type="evidence" value="ECO:0007669"/>
    <property type="project" value="UniProtKB-KW"/>
</dbReference>
<dbReference type="GO" id="GO:0009772">
    <property type="term" value="P:photosynthetic electron transport in photosystem II"/>
    <property type="evidence" value="ECO:0007669"/>
    <property type="project" value="InterPro"/>
</dbReference>
<dbReference type="FunFam" id="1.10.10.670:FF:000001">
    <property type="entry name" value="Photosystem II CP43 reaction center protein"/>
    <property type="match status" value="1"/>
</dbReference>
<dbReference type="Gene3D" id="1.10.10.670">
    <property type="entry name" value="photosystem ii from thermosynechococcus elongatus"/>
    <property type="match status" value="1"/>
</dbReference>
<dbReference type="HAMAP" id="MF_01496">
    <property type="entry name" value="PSII_PsbC_CP43"/>
    <property type="match status" value="1"/>
</dbReference>
<dbReference type="InterPro" id="IPR000932">
    <property type="entry name" value="PS_antenna-like"/>
</dbReference>
<dbReference type="InterPro" id="IPR036001">
    <property type="entry name" value="PS_II_antenna-like_sf"/>
</dbReference>
<dbReference type="InterPro" id="IPR005869">
    <property type="entry name" value="PSII_PsbC"/>
</dbReference>
<dbReference type="InterPro" id="IPR044900">
    <property type="entry name" value="PSII_PsbC_sf"/>
</dbReference>
<dbReference type="NCBIfam" id="TIGR01153">
    <property type="entry name" value="psbC"/>
    <property type="match status" value="1"/>
</dbReference>
<dbReference type="Pfam" id="PF00421">
    <property type="entry name" value="PSII"/>
    <property type="match status" value="1"/>
</dbReference>
<dbReference type="SUPFAM" id="SSF161077">
    <property type="entry name" value="Photosystem II antenna protein-like"/>
    <property type="match status" value="1"/>
</dbReference>
<organism>
    <name type="scientific">Euglena gracilis</name>
    <dbReference type="NCBI Taxonomy" id="3039"/>
    <lineage>
        <taxon>Eukaryota</taxon>
        <taxon>Discoba</taxon>
        <taxon>Euglenozoa</taxon>
        <taxon>Euglenida</taxon>
        <taxon>Spirocuta</taxon>
        <taxon>Euglenophyceae</taxon>
        <taxon>Euglenales</taxon>
        <taxon>Euglenaceae</taxon>
        <taxon>Euglena</taxon>
    </lineage>
</organism>
<feature type="propeptide" id="PRO_0000431221" evidence="1">
    <location>
        <begin position="1"/>
        <end position="2"/>
    </location>
</feature>
<feature type="chain" id="PRO_0000077513" description="Photosystem II CP43 reaction center protein" evidence="1">
    <location>
        <begin position="3"/>
        <end position="461"/>
    </location>
</feature>
<feature type="transmembrane region" description="Helical" evidence="1">
    <location>
        <begin position="57"/>
        <end position="81"/>
    </location>
</feature>
<feature type="transmembrane region" description="Helical" evidence="1">
    <location>
        <begin position="122"/>
        <end position="143"/>
    </location>
</feature>
<feature type="transmembrane region" description="Helical" evidence="1">
    <location>
        <begin position="166"/>
        <end position="188"/>
    </location>
</feature>
<feature type="transmembrane region" description="Helical" evidence="1">
    <location>
        <begin position="243"/>
        <end position="263"/>
    </location>
</feature>
<feature type="transmembrane region" description="Helical" evidence="1">
    <location>
        <begin position="279"/>
        <end position="300"/>
    </location>
</feature>
<feature type="transmembrane region" description="Helical" evidence="1">
    <location>
        <begin position="435"/>
        <end position="459"/>
    </location>
</feature>
<feature type="binding site" evidence="1">
    <location>
        <position position="355"/>
    </location>
    <ligand>
        <name>[CaMn4O5] cluster</name>
        <dbReference type="ChEBI" id="CHEBI:189552"/>
    </ligand>
</feature>
<feature type="modified residue" description="N-acetylthreonine" evidence="1">
    <location>
        <position position="3"/>
    </location>
</feature>
<feature type="modified residue" description="Phosphothreonine" evidence="1">
    <location>
        <position position="3"/>
    </location>
</feature>
<accession>P05700</accession>
<keyword id="KW-0007">Acetylation</keyword>
<keyword id="KW-0148">Chlorophyll</keyword>
<keyword id="KW-0150">Chloroplast</keyword>
<keyword id="KW-0157">Chromophore</keyword>
<keyword id="KW-0464">Manganese</keyword>
<keyword id="KW-0472">Membrane</keyword>
<keyword id="KW-0479">Metal-binding</keyword>
<keyword id="KW-0597">Phosphoprotein</keyword>
<keyword id="KW-0602">Photosynthesis</keyword>
<keyword id="KW-0604">Photosystem II</keyword>
<keyword id="KW-0934">Plastid</keyword>
<keyword id="KW-0793">Thylakoid</keyword>
<keyword id="KW-0812">Transmembrane</keyword>
<keyword id="KW-1133">Transmembrane helix</keyword>
<sequence>METLFNKKLTVGGRDQESTGFAWWAGNARLINVSGKLLGAHVAHAGLIVFWTGAMNLFEVAHFVPQKPMYEQGLILLPHLATLGFGVGFDGIVLDTYPFFVCGVLHLISSAVLGFGGVFHSLAGPDTLEESFRFFGYTWKRKKKLAAILGIHLCFLGLGALLLAWKAMYGGGVYDTWWPGGGDVRSITNPTLNPFIIFGYLVKSPFGGEGWIVSVDSMEYVIGGHIWIGILLVSGGFWHICSRPSPWVVRTFVWSGEAYLSYSLGAVATMGFIAVPMVWFNNTVYPSEFYGPTGPEASQAQAFTFLIRDQRLGTNIASAQGPTGLGKYLMKSPTGEIIFGGETMRFWDFRGPWLEPLRGPNGLDLNKLKNDVQPWQERRAAEYMTHAPLGSLNSVGGVATEINAVNFVNPRSWLATSHFVLAFFFFVGHLWHAGRARAAAIGFEKGIDRSREIARKLKPLD</sequence>
<geneLocation type="chloroplast"/>
<reference key="1">
    <citation type="journal article" date="1993" name="Nucleic Acids Res.">
        <title>Complete sequence of Euglena gracilis chloroplast DNA.</title>
        <authorList>
            <person name="Hallick R.B."/>
            <person name="Hong L."/>
            <person name="Drager R.G."/>
            <person name="Favreau M.R."/>
            <person name="Monfort A."/>
            <person name="Orsat B."/>
            <person name="Spielmann A."/>
            <person name="Stutz E."/>
        </authorList>
    </citation>
    <scope>NUCLEOTIDE SEQUENCE [LARGE SCALE GENOMIC DNA]</scope>
    <source>
        <strain>Z / UTEX 753</strain>
    </source>
</reference>
<reference key="2">
    <citation type="journal article" date="1994" name="Biochim. Biophys. Acta">
        <title>Analysis of the 22 kbp long psbD-psbC gene cluster of Euglena gracilis chloroplast DNA: evidence for overlapping transcription units undergoing differential processing.</title>
        <authorList>
            <person name="Orsat B."/>
            <person name="Spielmann A."/>
            <person name="Marc-Martin S."/>
            <person name="Lemberger T."/>
            <person name="Stutz E."/>
        </authorList>
    </citation>
    <scope>NUCLEOTIDE SEQUENCE [GENOMIC DNA] OF 1-39</scope>
</reference>
<reference key="3">
    <citation type="journal article" date="1986" name="Curr. Genet.">
        <title>Euglena gracilis chloroplast DNA: analysis of a 1.6 kb intron of the psb C gene containing an open reading frame of 458 codons.</title>
        <authorList>
            <person name="Montandon P.-E."/>
            <person name="Vasserot A."/>
            <person name="Stutz E."/>
        </authorList>
    </citation>
    <scope>NUCLEOTIDE SEQUENCE [GENOMIC DNA] OF 26-119</scope>
</reference>
<name>PSBC_EUGGR</name>
<proteinExistence type="inferred from homology"/>
<comment type="function">
    <text evidence="1">One of the components of the core complex of photosystem II (PSII). It binds chlorophyll and helps catalyze the primary light-induced photochemical processes of PSII. PSII is a light-driven water:plastoquinone oxidoreductase, using light energy to abstract electrons from H(2)O, generating O(2) and a proton gradient subsequently used for ATP formation.</text>
</comment>
<comment type="cofactor">
    <text evidence="1">Binds multiple chlorophylls and provides some of the ligands for the Ca-4Mn-5O cluster of the oxygen-evolving complex. It may also provide a ligand for a Cl- that is required for oxygen evolution. PSII binds additional chlorophylls, carotenoids and specific lipids.</text>
</comment>
<comment type="subunit">
    <text evidence="2">PSII is composed of 1 copy each of membrane proteins PsbA, PsbB, PsbC, PsbD, PsbE, PsbF, PsbH, PsbI, PsbJ, PsbK, PsbL, PsbM, PsbT, PsbY, PsbZ, Psb30/Ycf12, at least 3 peripheral proteins of the oxygen-evolving complex and a large number of cofactors. It forms dimeric complexes.</text>
</comment>
<comment type="subcellular location">
    <subcellularLocation>
        <location evidence="1">Plastid</location>
        <location evidence="1">Chloroplast thylakoid membrane</location>
        <topology evidence="1">Multi-pass membrane protein</topology>
    </subcellularLocation>
</comment>
<comment type="similarity">
    <text evidence="1">Belongs to the PsbB/PsbC family. PsbC subfamily.</text>
</comment>
<evidence type="ECO:0000255" key="1">
    <source>
        <dbReference type="HAMAP-Rule" id="MF_01496"/>
    </source>
</evidence>
<evidence type="ECO:0000305" key="2"/>